<name>RS1_STAAM</name>
<gene>
    <name type="primary">rpsA</name>
    <name type="ordered locus">SAV1476</name>
</gene>
<accession>Q99U14</accession>
<reference key="1">
    <citation type="journal article" date="2001" name="Lancet">
        <title>Whole genome sequencing of meticillin-resistant Staphylococcus aureus.</title>
        <authorList>
            <person name="Kuroda M."/>
            <person name="Ohta T."/>
            <person name="Uchiyama I."/>
            <person name="Baba T."/>
            <person name="Yuzawa H."/>
            <person name="Kobayashi I."/>
            <person name="Cui L."/>
            <person name="Oguchi A."/>
            <person name="Aoki K."/>
            <person name="Nagai Y."/>
            <person name="Lian J.-Q."/>
            <person name="Ito T."/>
            <person name="Kanamori M."/>
            <person name="Matsumaru H."/>
            <person name="Maruyama A."/>
            <person name="Murakami H."/>
            <person name="Hosoyama A."/>
            <person name="Mizutani-Ui Y."/>
            <person name="Takahashi N.K."/>
            <person name="Sawano T."/>
            <person name="Inoue R."/>
            <person name="Kaito C."/>
            <person name="Sekimizu K."/>
            <person name="Hirakawa H."/>
            <person name="Kuhara S."/>
            <person name="Goto S."/>
            <person name="Yabuzaki J."/>
            <person name="Kanehisa M."/>
            <person name="Yamashita A."/>
            <person name="Oshima K."/>
            <person name="Furuya K."/>
            <person name="Yoshino C."/>
            <person name="Shiba T."/>
            <person name="Hattori M."/>
            <person name="Ogasawara N."/>
            <person name="Hayashi H."/>
            <person name="Hiramatsu K."/>
        </authorList>
    </citation>
    <scope>NUCLEOTIDE SEQUENCE [LARGE SCALE GENOMIC DNA]</scope>
    <source>
        <strain>Mu50 / ATCC 700699</strain>
    </source>
</reference>
<feature type="chain" id="PRO_0000196048" description="Small ribosomal subunit protein bS1">
    <location>
        <begin position="1"/>
        <end position="391"/>
    </location>
</feature>
<feature type="domain" description="S1 motif 1" evidence="2">
    <location>
        <begin position="16"/>
        <end position="90"/>
    </location>
</feature>
<feature type="domain" description="S1 motif 2" evidence="2">
    <location>
        <begin position="108"/>
        <end position="173"/>
    </location>
</feature>
<feature type="domain" description="S1 motif 3" evidence="2">
    <location>
        <begin position="194"/>
        <end position="262"/>
    </location>
</feature>
<feature type="domain" description="S1 motif 4" evidence="2">
    <location>
        <begin position="279"/>
        <end position="348"/>
    </location>
</feature>
<dbReference type="EMBL" id="BA000017">
    <property type="protein sequence ID" value="BAB57638.1"/>
    <property type="molecule type" value="Genomic_DNA"/>
</dbReference>
<dbReference type="RefSeq" id="WP_000133961.1">
    <property type="nucleotide sequence ID" value="NC_002758.2"/>
</dbReference>
<dbReference type="SMR" id="Q99U14"/>
<dbReference type="KEGG" id="sav:SAV1476"/>
<dbReference type="HOGENOM" id="CLU_015805_4_5_9"/>
<dbReference type="PhylomeDB" id="Q99U14"/>
<dbReference type="Proteomes" id="UP000002481">
    <property type="component" value="Chromosome"/>
</dbReference>
<dbReference type="GO" id="GO:0022627">
    <property type="term" value="C:cytosolic small ribosomal subunit"/>
    <property type="evidence" value="ECO:0007669"/>
    <property type="project" value="TreeGrafter"/>
</dbReference>
<dbReference type="GO" id="GO:0003729">
    <property type="term" value="F:mRNA binding"/>
    <property type="evidence" value="ECO:0007669"/>
    <property type="project" value="TreeGrafter"/>
</dbReference>
<dbReference type="GO" id="GO:0003735">
    <property type="term" value="F:structural constituent of ribosome"/>
    <property type="evidence" value="ECO:0007669"/>
    <property type="project" value="TreeGrafter"/>
</dbReference>
<dbReference type="GO" id="GO:0006412">
    <property type="term" value="P:translation"/>
    <property type="evidence" value="ECO:0007669"/>
    <property type="project" value="TreeGrafter"/>
</dbReference>
<dbReference type="CDD" id="cd05687">
    <property type="entry name" value="S1_RPS1_repeat_ec1_hs1"/>
    <property type="match status" value="1"/>
</dbReference>
<dbReference type="CDD" id="cd04465">
    <property type="entry name" value="S1_RPS1_repeat_ec2_hs2"/>
    <property type="match status" value="1"/>
</dbReference>
<dbReference type="CDD" id="cd05688">
    <property type="entry name" value="S1_RPS1_repeat_ec3"/>
    <property type="match status" value="1"/>
</dbReference>
<dbReference type="FunFam" id="2.40.50.140:FF:000114">
    <property type="entry name" value="30S ribosomal protein S1"/>
    <property type="match status" value="1"/>
</dbReference>
<dbReference type="FunFam" id="2.40.50.140:FF:000166">
    <property type="entry name" value="30S ribosomal protein S1"/>
    <property type="match status" value="1"/>
</dbReference>
<dbReference type="FunFam" id="2.40.50.140:FF:000182">
    <property type="entry name" value="30S ribosomal protein S1"/>
    <property type="match status" value="1"/>
</dbReference>
<dbReference type="FunFam" id="2.40.50.140:FF:000051">
    <property type="entry name" value="RNA-binding transcriptional accessory protein"/>
    <property type="match status" value="1"/>
</dbReference>
<dbReference type="Gene3D" id="2.40.50.140">
    <property type="entry name" value="Nucleic acid-binding proteins"/>
    <property type="match status" value="4"/>
</dbReference>
<dbReference type="InterPro" id="IPR012340">
    <property type="entry name" value="NA-bd_OB-fold"/>
</dbReference>
<dbReference type="InterPro" id="IPR050437">
    <property type="entry name" value="Ribos_protein_bS1-like"/>
</dbReference>
<dbReference type="InterPro" id="IPR035104">
    <property type="entry name" value="Ribosomal_protein_S1-like"/>
</dbReference>
<dbReference type="InterPro" id="IPR003029">
    <property type="entry name" value="S1_domain"/>
</dbReference>
<dbReference type="NCBIfam" id="NF005208">
    <property type="entry name" value="PRK06676.1"/>
    <property type="match status" value="1"/>
</dbReference>
<dbReference type="PANTHER" id="PTHR10724">
    <property type="entry name" value="30S RIBOSOMAL PROTEIN S1"/>
    <property type="match status" value="1"/>
</dbReference>
<dbReference type="PANTHER" id="PTHR10724:SF7">
    <property type="entry name" value="SMALL RIBOSOMAL SUBUNIT PROTEIN BS1C"/>
    <property type="match status" value="1"/>
</dbReference>
<dbReference type="Pfam" id="PF00575">
    <property type="entry name" value="S1"/>
    <property type="match status" value="4"/>
</dbReference>
<dbReference type="PRINTS" id="PR00681">
    <property type="entry name" value="RIBOSOMALS1"/>
</dbReference>
<dbReference type="SMART" id="SM00316">
    <property type="entry name" value="S1"/>
    <property type="match status" value="4"/>
</dbReference>
<dbReference type="SUPFAM" id="SSF50249">
    <property type="entry name" value="Nucleic acid-binding proteins"/>
    <property type="match status" value="4"/>
</dbReference>
<dbReference type="PROSITE" id="PS50126">
    <property type="entry name" value="S1"/>
    <property type="match status" value="4"/>
</dbReference>
<sequence length="391" mass="43309">MTEEFNESMINDIKEGDKVTGEVQQVEDKQVVVHINGGKFNGIIPISQLSTHHIDSPSEVVKEGDEVEAYVTKVEFDEENETGAYILSRRQLETEKSYSYLQEKLDNNEIIEAKVTEVVKGGLVVDVGQRGFVPASLISTDFIEDFSVFDGQTIRIKVEELDPENNRVILSRKAVEQEENDAKKDQLLQSLNEGDVIHGKVARLTQFGAFIDIGGVDGLVHVSELSHEHVQTPEEVVSIGQDVKVKIKSIDRDTERISLSIKDTLPTPFENIKGQFHENDVIEGVVVRLANFGAFVEIAPGVQGLVHISEIAHKHIGTPGEVLEPGQQVNVKILGIDEENERVSLSIKATLPNEDVVESDPSTTKAYLENEEEDNPTIGDMIGDKLKNLKL</sequence>
<proteinExistence type="inferred from homology"/>
<organism>
    <name type="scientific">Staphylococcus aureus (strain Mu50 / ATCC 700699)</name>
    <dbReference type="NCBI Taxonomy" id="158878"/>
    <lineage>
        <taxon>Bacteria</taxon>
        <taxon>Bacillati</taxon>
        <taxon>Bacillota</taxon>
        <taxon>Bacilli</taxon>
        <taxon>Bacillales</taxon>
        <taxon>Staphylococcaceae</taxon>
        <taxon>Staphylococcus</taxon>
    </lineage>
</organism>
<protein>
    <recommendedName>
        <fullName evidence="3">Small ribosomal subunit protein bS1</fullName>
    </recommendedName>
    <alternativeName>
        <fullName>30S ribosomal protein S1</fullName>
    </alternativeName>
</protein>
<evidence type="ECO:0000250" key="1"/>
<evidence type="ECO:0000255" key="2">
    <source>
        <dbReference type="PROSITE-ProRule" id="PRU00180"/>
    </source>
</evidence>
<evidence type="ECO:0000305" key="3"/>
<comment type="function">
    <text evidence="1">Binds mRNA; thus facilitating recognition of the initiation point. It is needed to translate mRNA with a short Shine-Dalgarno (SD) purine-rich sequence (By similarity).</text>
</comment>
<comment type="similarity">
    <text evidence="3">Belongs to the bacterial ribosomal protein bS1 family.</text>
</comment>
<keyword id="KW-0677">Repeat</keyword>
<keyword id="KW-0687">Ribonucleoprotein</keyword>
<keyword id="KW-0689">Ribosomal protein</keyword>
<keyword id="KW-0694">RNA-binding</keyword>